<accession>P15862</accession>
<accession>Q4PR89</accession>
<accession>Q5XJJ4</accession>
<accession>Q6LAJ7</accession>
<accession>Q9PWM4</accession>
<proteinExistence type="evidence at transcript level"/>
<reference key="1">
    <citation type="journal article" date="1998" name="Science">
        <title>Zebrafish hox clusters and vertebrate genome evolution.</title>
        <authorList>
            <person name="Amores A."/>
            <person name="Force A."/>
            <person name="Yan Y.-L."/>
            <person name="Joly L."/>
            <person name="Amemiya C."/>
            <person name="Fritz A."/>
            <person name="Ho R.K."/>
            <person name="Langeland J."/>
            <person name="Prince V.E."/>
            <person name="Wang Y.-L."/>
            <person name="Westerfield M."/>
            <person name="Ekker M."/>
            <person name="Postlethwait J.H."/>
        </authorList>
    </citation>
    <scope>NUCLEOTIDE SEQUENCE [GENOMIC DNA]</scope>
</reference>
<reference key="2">
    <citation type="submission" date="2004-10" db="EMBL/GenBank/DDBJ databases">
        <authorList>
            <consortium name="NIH - Zebrafish Gene Collection (ZGC) project"/>
        </authorList>
    </citation>
    <scope>NUCLEOTIDE SEQUENCE [LARGE SCALE MRNA] OF 2-231</scope>
</reference>
<reference key="3">
    <citation type="journal article" date="2005" name="Evol. Dev.">
        <title>Genomic annotation and transcriptome analysis of the zebrafish (Danio rerio) hox complex with description of a novel member, hoxb13a.</title>
        <authorList>
            <person name="Corredor-Adamez M."/>
            <person name="Welten M.C.M."/>
            <person name="Spaink H.P."/>
            <person name="Jeffery J.E."/>
            <person name="Schoon R.T."/>
            <person name="de Bakker M.A.G."/>
            <person name="Bagowski C.P."/>
            <person name="Meijer A.H."/>
            <person name="Verbeek F.J."/>
            <person name="Richardson M.K."/>
        </authorList>
    </citation>
    <scope>NUCLEOTIDE SEQUENCE [MRNA] OF 40-147</scope>
    <source>
        <strain>Tuebingen</strain>
    </source>
</reference>
<reference key="4">
    <citation type="journal article" date="1990" name="EMBO J.">
        <title>The zebrafish homeobox gene hox-2.2: transcription unit, potential regulatory regions and in situ localization of transcripts.</title>
        <authorList>
            <person name="Njolstad P.R."/>
            <person name="Molven A."/>
            <person name="Apold J."/>
            <person name="Fjose A."/>
        </authorList>
    </citation>
    <scope>NUCLEOTIDE SEQUENCE [GENOMIC DNA] OF 136-231</scope>
</reference>
<reference key="5">
    <citation type="journal article" date="1998" name="Development">
        <title>Zebrafish hox genes: genomic organization and modified colinear expression patterns in the trunk.</title>
        <authorList>
            <person name="Prince V.E."/>
            <person name="Joly L."/>
            <person name="Ekker M."/>
            <person name="Ho R.K."/>
        </authorList>
    </citation>
    <scope>NUCLEOTIDE SEQUENCE [MRNA] OF 143-231</scope>
    <scope>DEVELOPMENTAL STAGE</scope>
    <source>
        <tissue>Embryo</tissue>
    </source>
</reference>
<reference key="6">
    <citation type="journal article" date="2004" name="Dev. Biol.">
        <title>Differences in expression pattern and function between zebrafish hoxc13 orthologs: recruitment of Hoxc13b into an early embryonic role.</title>
        <authorList>
            <person name="Thummel R."/>
            <person name="Li L."/>
            <person name="Tanase C."/>
            <person name="Sarras M.P. Jr."/>
            <person name="Godwin A.R."/>
        </authorList>
    </citation>
    <scope>DEVELOPMENTAL STAGE</scope>
</reference>
<sequence length="231" mass="26733">MNSYFANPSLSCHLSGGQEVLPNMPLNSTTYDSVRHFSSYGTTVTQNRIYASPFYSPQDNVVFGSSRGPYEYGSNVFLQDKDVLPSCRQTSMGLNAQSHVAQEYNLEQARAGTQDQKANNIQIYPWMQRMNSHSGVGYGSDRRRGRQIYSRYQTLELEKEFHFNRYLTRRRRIEIANALCLTERQIKIWFQNRRMKWKKETNLTSTVPGTESAGTPQETEKETEEEPKKKD</sequence>
<gene>
    <name type="primary">hoxc6a</name>
    <name type="synonym">hox-c6</name>
    <name type="synonym">hoxc6</name>
    <name type="synonym">zf61</name>
    <name type="ORF">zgc:101882</name>
</gene>
<protein>
    <recommendedName>
        <fullName>Homeobox protein Hox-C6a</fullName>
        <shortName>Hox-C6</shortName>
    </recommendedName>
    <alternativeName>
        <fullName>Homeobox protein Zf-61</fullName>
    </alternativeName>
</protein>
<comment type="function">
    <text evidence="1">Sequence-specific transcription factor which is part of a developmental regulatory system that provides cells with specific positional identities on the anterior-posterior axis.</text>
</comment>
<comment type="subcellular location">
    <subcellularLocation>
        <location evidence="2">Nucleus</location>
    </subcellularLocation>
</comment>
<comment type="developmental stage">
    <text evidence="4 5">Expressed both maternally and zygotically, from ova through to 48 hours post-fertilization. At the 10-somite stage, expressed in the paraxial mesoderm with an anterior expression limit at somite 5. At the 20-somite stage, expressed in the developing CNS with an anterior expression adjacent to the somite 2/3 boundary.</text>
</comment>
<comment type="similarity">
    <text evidence="6">Belongs to the Antp homeobox family.</text>
</comment>
<comment type="sequence caution" evidence="6">
    <conflict type="erroneous initiation">
        <sequence resource="EMBL-CDS" id="AAH83307"/>
    </conflict>
</comment>
<evidence type="ECO:0000250" key="1"/>
<evidence type="ECO:0000255" key="2">
    <source>
        <dbReference type="PROSITE-ProRule" id="PRU00108"/>
    </source>
</evidence>
<evidence type="ECO:0000256" key="3">
    <source>
        <dbReference type="SAM" id="MobiDB-lite"/>
    </source>
</evidence>
<evidence type="ECO:0000269" key="4">
    <source>
    </source>
</evidence>
<evidence type="ECO:0000269" key="5">
    <source>
    </source>
</evidence>
<evidence type="ECO:0000305" key="6"/>
<feature type="chain" id="PRO_0000200177" description="Homeobox protein Hox-C6a">
    <location>
        <begin position="1"/>
        <end position="231"/>
    </location>
</feature>
<feature type="DNA-binding region" description="Homeobox" evidence="2">
    <location>
        <begin position="142"/>
        <end position="201"/>
    </location>
</feature>
<feature type="region of interest" description="Disordered" evidence="3">
    <location>
        <begin position="200"/>
        <end position="231"/>
    </location>
</feature>
<feature type="short sequence motif" description="Antp-type hexapeptide">
    <location>
        <begin position="123"/>
        <end position="128"/>
    </location>
</feature>
<feature type="compositionally biased region" description="Polar residues" evidence="3">
    <location>
        <begin position="202"/>
        <end position="217"/>
    </location>
</feature>
<keyword id="KW-0217">Developmental protein</keyword>
<keyword id="KW-0238">DNA-binding</keyword>
<keyword id="KW-0371">Homeobox</keyword>
<keyword id="KW-0539">Nucleus</keyword>
<keyword id="KW-1185">Reference proteome</keyword>
<keyword id="KW-0804">Transcription</keyword>
<keyword id="KW-0805">Transcription regulation</keyword>
<organism>
    <name type="scientific">Danio rerio</name>
    <name type="common">Zebrafish</name>
    <name type="synonym">Brachydanio rerio</name>
    <dbReference type="NCBI Taxonomy" id="7955"/>
    <lineage>
        <taxon>Eukaryota</taxon>
        <taxon>Metazoa</taxon>
        <taxon>Chordata</taxon>
        <taxon>Craniata</taxon>
        <taxon>Vertebrata</taxon>
        <taxon>Euteleostomi</taxon>
        <taxon>Actinopterygii</taxon>
        <taxon>Neopterygii</taxon>
        <taxon>Teleostei</taxon>
        <taxon>Ostariophysi</taxon>
        <taxon>Cypriniformes</taxon>
        <taxon>Danionidae</taxon>
        <taxon>Danioninae</taxon>
        <taxon>Danio</taxon>
    </lineage>
</organism>
<dbReference type="EMBL" id="AF071265">
    <property type="protein sequence ID" value="AAD15958.1"/>
    <property type="molecule type" value="Genomic_DNA"/>
</dbReference>
<dbReference type="EMBL" id="BC083307">
    <property type="protein sequence ID" value="AAH83307.1"/>
    <property type="status" value="ALT_INIT"/>
    <property type="molecule type" value="mRNA"/>
</dbReference>
<dbReference type="EMBL" id="DQ060554">
    <property type="protein sequence ID" value="AAY67932.1"/>
    <property type="molecule type" value="mRNA"/>
</dbReference>
<dbReference type="EMBL" id="X17266">
    <property type="protein sequence ID" value="CAA35170.1"/>
    <property type="molecule type" value="Genomic_DNA"/>
</dbReference>
<dbReference type="EMBL" id="Y14546">
    <property type="protein sequence ID" value="CAA74881.1"/>
    <property type="molecule type" value="mRNA"/>
</dbReference>
<dbReference type="PIR" id="S08639">
    <property type="entry name" value="S08639"/>
</dbReference>
<dbReference type="RefSeq" id="NP_571198.1">
    <property type="nucleotide sequence ID" value="NM_131123.1"/>
</dbReference>
<dbReference type="SMR" id="P15862"/>
<dbReference type="FunCoup" id="P15862">
    <property type="interactions" value="918"/>
</dbReference>
<dbReference type="STRING" id="7955.ENSDARP00000107797"/>
<dbReference type="PaxDb" id="7955-ENSDARP00000093809"/>
<dbReference type="DNASU" id="30346"/>
<dbReference type="GeneID" id="30346"/>
<dbReference type="KEGG" id="dre:30346"/>
<dbReference type="AGR" id="ZFIN:ZDB-GENE-990415-113"/>
<dbReference type="CTD" id="30346"/>
<dbReference type="ZFIN" id="ZDB-GENE-990415-113">
    <property type="gene designation" value="hoxc6a"/>
</dbReference>
<dbReference type="eggNOG" id="KOG0489">
    <property type="taxonomic scope" value="Eukaryota"/>
</dbReference>
<dbReference type="InParanoid" id="P15862"/>
<dbReference type="OrthoDB" id="6159439at2759"/>
<dbReference type="PhylomeDB" id="P15862"/>
<dbReference type="TreeFam" id="TF316310"/>
<dbReference type="PRO" id="PR:P15862"/>
<dbReference type="Proteomes" id="UP000000437">
    <property type="component" value="Chromosome 23"/>
</dbReference>
<dbReference type="GO" id="GO:0005634">
    <property type="term" value="C:nucleus"/>
    <property type="evidence" value="ECO:0000318"/>
    <property type="project" value="GO_Central"/>
</dbReference>
<dbReference type="GO" id="GO:0000981">
    <property type="term" value="F:DNA-binding transcription factor activity, RNA polymerase II-specific"/>
    <property type="evidence" value="ECO:0000318"/>
    <property type="project" value="GO_Central"/>
</dbReference>
<dbReference type="GO" id="GO:0000978">
    <property type="term" value="F:RNA polymerase II cis-regulatory region sequence-specific DNA binding"/>
    <property type="evidence" value="ECO:0000318"/>
    <property type="project" value="GO_Central"/>
</dbReference>
<dbReference type="GO" id="GO:0009952">
    <property type="term" value="P:anterior/posterior pattern specification"/>
    <property type="evidence" value="ECO:0000318"/>
    <property type="project" value="GO_Central"/>
</dbReference>
<dbReference type="GO" id="GO:0006357">
    <property type="term" value="P:regulation of transcription by RNA polymerase II"/>
    <property type="evidence" value="ECO:0000318"/>
    <property type="project" value="GO_Central"/>
</dbReference>
<dbReference type="CDD" id="cd00086">
    <property type="entry name" value="homeodomain"/>
    <property type="match status" value="1"/>
</dbReference>
<dbReference type="FunFam" id="1.10.10.60:FF:000879">
    <property type="match status" value="1"/>
</dbReference>
<dbReference type="Gene3D" id="1.10.10.60">
    <property type="entry name" value="Homeodomain-like"/>
    <property type="match status" value="1"/>
</dbReference>
<dbReference type="InterPro" id="IPR050296">
    <property type="entry name" value="Antp_homeobox"/>
</dbReference>
<dbReference type="InterPro" id="IPR001356">
    <property type="entry name" value="HD"/>
</dbReference>
<dbReference type="InterPro" id="IPR020479">
    <property type="entry name" value="HD_metazoa"/>
</dbReference>
<dbReference type="InterPro" id="IPR001827">
    <property type="entry name" value="Homeobox_Antennapedia_CS"/>
</dbReference>
<dbReference type="InterPro" id="IPR017970">
    <property type="entry name" value="Homeobox_CS"/>
</dbReference>
<dbReference type="InterPro" id="IPR009057">
    <property type="entry name" value="Homeodomain-like_sf"/>
</dbReference>
<dbReference type="PANTHER" id="PTHR45659">
    <property type="entry name" value="HOMEOBOX PROTEIN HOX"/>
    <property type="match status" value="1"/>
</dbReference>
<dbReference type="PANTHER" id="PTHR45659:SF1">
    <property type="entry name" value="HOMEOBOX PROTEIN HOX-C6"/>
    <property type="match status" value="1"/>
</dbReference>
<dbReference type="Pfam" id="PF00046">
    <property type="entry name" value="Homeodomain"/>
    <property type="match status" value="1"/>
</dbReference>
<dbReference type="PRINTS" id="PR00024">
    <property type="entry name" value="HOMEOBOX"/>
</dbReference>
<dbReference type="SMART" id="SM00389">
    <property type="entry name" value="HOX"/>
    <property type="match status" value="1"/>
</dbReference>
<dbReference type="SUPFAM" id="SSF46689">
    <property type="entry name" value="Homeodomain-like"/>
    <property type="match status" value="1"/>
</dbReference>
<dbReference type="PROSITE" id="PS00032">
    <property type="entry name" value="ANTENNAPEDIA"/>
    <property type="match status" value="1"/>
</dbReference>
<dbReference type="PROSITE" id="PS00027">
    <property type="entry name" value="HOMEOBOX_1"/>
    <property type="match status" value="1"/>
</dbReference>
<dbReference type="PROSITE" id="PS50071">
    <property type="entry name" value="HOMEOBOX_2"/>
    <property type="match status" value="1"/>
</dbReference>
<name>HXC6A_DANRE</name>